<geneLocation type="mitochondrion"/>
<organism>
    <name type="scientific">Saccharomyces cerevisiae (strain ATCC 204508 / S288c)</name>
    <name type="common">Baker's yeast</name>
    <dbReference type="NCBI Taxonomy" id="559292"/>
    <lineage>
        <taxon>Eukaryota</taxon>
        <taxon>Fungi</taxon>
        <taxon>Dikarya</taxon>
        <taxon>Ascomycota</taxon>
        <taxon>Saccharomycotina</taxon>
        <taxon>Saccharomycetes</taxon>
        <taxon>Saccharomycetales</taxon>
        <taxon>Saccharomycetaceae</taxon>
        <taxon>Saccharomyces</taxon>
    </lineage>
</organism>
<comment type="subcellular location">
    <subcellularLocation>
        <location evidence="2">Mitochondrion</location>
    </subcellularLocation>
</comment>
<comment type="caution">
    <text evidence="2">Product of a dubious gene prediction. Completely overlaps the gene coding for mitochondrial 9S RNA (RPM1).</text>
</comment>
<sequence>MKMKTNKYMNMVRPAPPRRADPEGVRDPSTMGGGPNPFLRRSPYMYINKKK</sequence>
<keyword id="KW-0496">Mitochondrion</keyword>
<keyword id="KW-1185">Reference proteome</keyword>
<evidence type="ECO:0000256" key="1">
    <source>
        <dbReference type="SAM" id="MobiDB-lite"/>
    </source>
</evidence>
<evidence type="ECO:0000305" key="2"/>
<proteinExistence type="uncertain"/>
<feature type="chain" id="PRO_0000299686" description="Putative uncharacterized protein Q0297, mitochondrial">
    <location>
        <begin position="1"/>
        <end position="51"/>
    </location>
</feature>
<feature type="region of interest" description="Disordered" evidence="1">
    <location>
        <begin position="1"/>
        <end position="42"/>
    </location>
</feature>
<dbReference type="EMBL" id="KP263414">
    <property type="status" value="NOT_ANNOTATED_CDS"/>
    <property type="molecule type" value="Genomic_DNA"/>
</dbReference>
<dbReference type="PIR" id="S78688">
    <property type="entry name" value="S78688"/>
</dbReference>
<dbReference type="STRING" id="4932.Q0297"/>
<dbReference type="PaxDb" id="4932-Q0297"/>
<dbReference type="EnsemblFungi" id="Q0297_mRNA">
    <property type="protein sequence ID" value="Q0297"/>
    <property type="gene ID" value="Q0297"/>
</dbReference>
<dbReference type="AGR" id="SGD:S000007284"/>
<dbReference type="SGD" id="S000007284">
    <property type="gene designation" value="Q0297"/>
</dbReference>
<dbReference type="HOGENOM" id="CLU_3108210_0_0_1"/>
<dbReference type="InParanoid" id="Q9ZZV8"/>
<dbReference type="Proteomes" id="UP000002311">
    <property type="component" value="Mitochondrion"/>
</dbReference>
<dbReference type="RNAct" id="Q9ZZV8">
    <property type="molecule type" value="protein"/>
</dbReference>
<dbReference type="GO" id="GO:0005739">
    <property type="term" value="C:mitochondrion"/>
    <property type="evidence" value="ECO:0007669"/>
    <property type="project" value="UniProtKB-SubCell"/>
</dbReference>
<name>Q0297_YEAST</name>
<reference key="1">
    <citation type="journal article" date="1998" name="FEBS Lett.">
        <title>The complete sequence of the mitochondrial genome of Saccharomyces cerevisiae.</title>
        <authorList>
            <person name="Foury F."/>
            <person name="Roganti T."/>
            <person name="Lecrenier N."/>
            <person name="Purnelle B."/>
        </authorList>
    </citation>
    <scope>NUCLEOTIDE SEQUENCE [LARGE SCALE GENOMIC DNA]</scope>
    <source>
        <strain>ATCC 96604 / S288c / FY1679</strain>
    </source>
</reference>
<reference key="2">
    <citation type="journal article" date="2014" name="G3 (Bethesda)">
        <title>The reference genome sequence of Saccharomyces cerevisiae: Then and now.</title>
        <authorList>
            <person name="Engel S.R."/>
            <person name="Dietrich F.S."/>
            <person name="Fisk D.G."/>
            <person name="Binkley G."/>
            <person name="Balakrishnan R."/>
            <person name="Costanzo M.C."/>
            <person name="Dwight S.S."/>
            <person name="Hitz B.C."/>
            <person name="Karra K."/>
            <person name="Nash R.S."/>
            <person name="Weng S."/>
            <person name="Wong E.D."/>
            <person name="Lloyd P."/>
            <person name="Skrzypek M.S."/>
            <person name="Miyasato S.R."/>
            <person name="Simison M."/>
            <person name="Cherry J.M."/>
        </authorList>
    </citation>
    <scope>GENOME REANNOTATION</scope>
    <source>
        <strain>ATCC 96604 / S288c / FY1679</strain>
    </source>
</reference>
<accession>Q9ZZV8</accession>
<gene>
    <name type="ordered locus">Q0297</name>
    <name type="ORF">ORF12</name>
</gene>
<protein>
    <recommendedName>
        <fullName>Putative uncharacterized protein Q0297, mitochondrial</fullName>
    </recommendedName>
</protein>